<name>NUOA_CITK8</name>
<dbReference type="EC" id="7.1.1.-" evidence="1"/>
<dbReference type="EMBL" id="CP000822">
    <property type="protein sequence ID" value="ABV11664.1"/>
    <property type="molecule type" value="Genomic_DNA"/>
</dbReference>
<dbReference type="RefSeq" id="WP_012131490.1">
    <property type="nucleotide sequence ID" value="NC_009792.1"/>
</dbReference>
<dbReference type="SMR" id="A8ADV1"/>
<dbReference type="STRING" id="290338.CKO_00508"/>
<dbReference type="GeneID" id="45134750"/>
<dbReference type="KEGG" id="cko:CKO_00508"/>
<dbReference type="HOGENOM" id="CLU_119549_2_0_6"/>
<dbReference type="OrthoDB" id="9791970at2"/>
<dbReference type="Proteomes" id="UP000008148">
    <property type="component" value="Chromosome"/>
</dbReference>
<dbReference type="GO" id="GO:0030964">
    <property type="term" value="C:NADH dehydrogenase complex"/>
    <property type="evidence" value="ECO:0007669"/>
    <property type="project" value="TreeGrafter"/>
</dbReference>
<dbReference type="GO" id="GO:0005886">
    <property type="term" value="C:plasma membrane"/>
    <property type="evidence" value="ECO:0007669"/>
    <property type="project" value="UniProtKB-SubCell"/>
</dbReference>
<dbReference type="GO" id="GO:0008137">
    <property type="term" value="F:NADH dehydrogenase (ubiquinone) activity"/>
    <property type="evidence" value="ECO:0007669"/>
    <property type="project" value="InterPro"/>
</dbReference>
<dbReference type="GO" id="GO:0050136">
    <property type="term" value="F:NADH:ubiquinone reductase (non-electrogenic) activity"/>
    <property type="evidence" value="ECO:0007669"/>
    <property type="project" value="UniProtKB-UniRule"/>
</dbReference>
<dbReference type="GO" id="GO:0048038">
    <property type="term" value="F:quinone binding"/>
    <property type="evidence" value="ECO:0007669"/>
    <property type="project" value="UniProtKB-KW"/>
</dbReference>
<dbReference type="FunFam" id="1.20.58.1610:FF:000003">
    <property type="entry name" value="NADH-quinone oxidoreductase subunit A"/>
    <property type="match status" value="1"/>
</dbReference>
<dbReference type="Gene3D" id="1.20.58.1610">
    <property type="entry name" value="NADH:ubiquinone/plastoquinone oxidoreductase, chain 3"/>
    <property type="match status" value="1"/>
</dbReference>
<dbReference type="HAMAP" id="MF_01394">
    <property type="entry name" value="NDH1_NuoA"/>
    <property type="match status" value="1"/>
</dbReference>
<dbReference type="InterPro" id="IPR023043">
    <property type="entry name" value="NAD(P)H_OxRDtase_bac/plastid"/>
</dbReference>
<dbReference type="InterPro" id="IPR000440">
    <property type="entry name" value="NADH_UbQ/plastoQ_OxRdtase_su3"/>
</dbReference>
<dbReference type="InterPro" id="IPR038430">
    <property type="entry name" value="NDAH_ubi_oxred_su3_sf"/>
</dbReference>
<dbReference type="PANTHER" id="PTHR11058:SF21">
    <property type="entry name" value="NADH-QUINONE OXIDOREDUCTASE SUBUNIT A"/>
    <property type="match status" value="1"/>
</dbReference>
<dbReference type="PANTHER" id="PTHR11058">
    <property type="entry name" value="NADH-UBIQUINONE OXIDOREDUCTASE CHAIN 3"/>
    <property type="match status" value="1"/>
</dbReference>
<dbReference type="Pfam" id="PF00507">
    <property type="entry name" value="Oxidored_q4"/>
    <property type="match status" value="1"/>
</dbReference>
<evidence type="ECO:0000255" key="1">
    <source>
        <dbReference type="HAMAP-Rule" id="MF_01394"/>
    </source>
</evidence>
<reference key="1">
    <citation type="submission" date="2007-08" db="EMBL/GenBank/DDBJ databases">
        <authorList>
            <consortium name="The Citrobacter koseri Genome Sequencing Project"/>
            <person name="McClelland M."/>
            <person name="Sanderson E.K."/>
            <person name="Porwollik S."/>
            <person name="Spieth J."/>
            <person name="Clifton W.S."/>
            <person name="Latreille P."/>
            <person name="Courtney L."/>
            <person name="Wang C."/>
            <person name="Pepin K."/>
            <person name="Bhonagiri V."/>
            <person name="Nash W."/>
            <person name="Johnson M."/>
            <person name="Thiruvilangam P."/>
            <person name="Wilson R."/>
        </authorList>
    </citation>
    <scope>NUCLEOTIDE SEQUENCE [LARGE SCALE GENOMIC DNA]</scope>
    <source>
        <strain>ATCC BAA-895 / CDC 4225-83 / SGSC4696</strain>
    </source>
</reference>
<accession>A8ADV1</accession>
<comment type="function">
    <text evidence="1">NDH-1 shuttles electrons from NADH, via FMN and iron-sulfur (Fe-S) centers, to quinones in the respiratory chain. The immediate electron acceptor for the enzyme in this species is believed to be ubiquinone. Couples the redox reaction to proton translocation (for every two electrons transferred, four hydrogen ions are translocated across the cytoplasmic membrane), and thus conserves the redox energy in a proton gradient.</text>
</comment>
<comment type="catalytic activity">
    <reaction evidence="1">
        <text>a quinone + NADH + 5 H(+)(in) = a quinol + NAD(+) + 4 H(+)(out)</text>
        <dbReference type="Rhea" id="RHEA:57888"/>
        <dbReference type="ChEBI" id="CHEBI:15378"/>
        <dbReference type="ChEBI" id="CHEBI:24646"/>
        <dbReference type="ChEBI" id="CHEBI:57540"/>
        <dbReference type="ChEBI" id="CHEBI:57945"/>
        <dbReference type="ChEBI" id="CHEBI:132124"/>
    </reaction>
</comment>
<comment type="subunit">
    <text evidence="1">NDH-1 is composed of 13 different subunits. Subunits NuoA, H, J, K, L, M, N constitute the membrane sector of the complex.</text>
</comment>
<comment type="subcellular location">
    <subcellularLocation>
        <location evidence="1">Cell inner membrane</location>
        <topology evidence="1">Multi-pass membrane protein</topology>
    </subcellularLocation>
</comment>
<comment type="similarity">
    <text evidence="1">Belongs to the complex I subunit 3 family.</text>
</comment>
<protein>
    <recommendedName>
        <fullName evidence="1">NADH-quinone oxidoreductase subunit A</fullName>
        <ecNumber evidence="1">7.1.1.-</ecNumber>
    </recommendedName>
    <alternativeName>
        <fullName evidence="1">NADH dehydrogenase I subunit A</fullName>
    </alternativeName>
    <alternativeName>
        <fullName evidence="1">NDH-1 subunit A</fullName>
    </alternativeName>
    <alternativeName>
        <fullName evidence="1">NUO1</fullName>
    </alternativeName>
</protein>
<feature type="chain" id="PRO_0000362664" description="NADH-quinone oxidoreductase subunit A">
    <location>
        <begin position="1"/>
        <end position="147"/>
    </location>
</feature>
<feature type="transmembrane region" description="Helical" evidence="1">
    <location>
        <begin position="16"/>
        <end position="36"/>
    </location>
</feature>
<feature type="transmembrane region" description="Helical" evidence="1">
    <location>
        <begin position="68"/>
        <end position="88"/>
    </location>
</feature>
<feature type="transmembrane region" description="Helical" evidence="1">
    <location>
        <begin position="98"/>
        <end position="118"/>
    </location>
</feature>
<proteinExistence type="inferred from homology"/>
<gene>
    <name evidence="1" type="primary">nuoA</name>
    <name type="ordered locus">CKO_00508</name>
</gene>
<keyword id="KW-0997">Cell inner membrane</keyword>
<keyword id="KW-1003">Cell membrane</keyword>
<keyword id="KW-0472">Membrane</keyword>
<keyword id="KW-0520">NAD</keyword>
<keyword id="KW-0874">Quinone</keyword>
<keyword id="KW-1185">Reference proteome</keyword>
<keyword id="KW-1278">Translocase</keyword>
<keyword id="KW-0812">Transmembrane</keyword>
<keyword id="KW-1133">Transmembrane helix</keyword>
<keyword id="KW-0813">Transport</keyword>
<keyword id="KW-0830">Ubiquinone</keyword>
<organism>
    <name type="scientific">Citrobacter koseri (strain ATCC BAA-895 / CDC 4225-83 / SGSC4696)</name>
    <dbReference type="NCBI Taxonomy" id="290338"/>
    <lineage>
        <taxon>Bacteria</taxon>
        <taxon>Pseudomonadati</taxon>
        <taxon>Pseudomonadota</taxon>
        <taxon>Gammaproteobacteria</taxon>
        <taxon>Enterobacterales</taxon>
        <taxon>Enterobacteriaceae</taxon>
        <taxon>Citrobacter</taxon>
    </lineage>
</organism>
<sequence>MSMSTSTEIIAHHWAFAIFLIIAIGLCCLMLVGGWFLGGRARARSKNTPFESGIDSVGSARLRLSAKFYLVAMFFVIFDVEALYLFAWSTSIRESGWVGFVEAAIFIFVLLAGLVYLVRIGALDWTPARSRRERMNPETNSIANRQR</sequence>